<organism>
    <name type="scientific">Mycobacterium tuberculosis (strain ATCC 25618 / H37Rv)</name>
    <dbReference type="NCBI Taxonomy" id="83332"/>
    <lineage>
        <taxon>Bacteria</taxon>
        <taxon>Bacillati</taxon>
        <taxon>Actinomycetota</taxon>
        <taxon>Actinomycetes</taxon>
        <taxon>Mycobacteriales</taxon>
        <taxon>Mycobacteriaceae</taxon>
        <taxon>Mycobacterium</taxon>
        <taxon>Mycobacterium tuberculosis complex</taxon>
    </lineage>
</organism>
<proteinExistence type="evidence at protein level"/>
<keyword id="KW-0029">Amino-acid transport</keyword>
<keyword id="KW-1003">Cell membrane</keyword>
<keyword id="KW-0472">Membrane</keyword>
<keyword id="KW-1185">Reference proteome</keyword>
<keyword id="KW-0812">Transmembrane</keyword>
<keyword id="KW-1133">Transmembrane helix</keyword>
<keyword id="KW-0813">Transport</keyword>
<protein>
    <recommendedName>
        <fullName evidence="1">Probable threonine/serine exporter</fullName>
    </recommendedName>
</protein>
<sequence length="529" mass="54775">MDQDRSDNTALRRGLRIALRGRRDPLPVAGRRSRTSGGIDDLHTRKVLDLTIRLAEVMLSSGSGTADVVATAQDVAQAYQLTDCVVDITVTTIIVSALATTDTPPVTIMRSVRTRSTDYSRLAELDRLVQRITSGGVAVDQAHEAMDELTERPHPYPRWLATAGAAGFALGVAMLLGGTWLTCVLAAVTSGVIDRLGRLLNRIGTPLFFQRVFGAGIATLVAVAAYLIAGQDPTALVATGIVVLLSGMTLVGSMQDAVTGYMLTALARLGDALFLTAGIVVGILISLRGVTNAGIQIELHVDATTTLATPGMPLPILVAVSGAALSGVCLTIASYAPLRSVATAGLSAGLAELVLIGLGAAGFGRVVATWTAAIGVGFLATLISIRRQAPALVTATAGIMPMLPGLAVFRAVFAFAVNDTPDGGLTQLLEAAATALALGSGVVLGEFLASPLRYGAGRIGDLFRIEGPPGLRRAVGRVVRLQPAKSQQPTGTGGQRWRSVALEPTTADDVDAGYRGDWPATCTSATEVR</sequence>
<dbReference type="EMBL" id="AL123456">
    <property type="protein sequence ID" value="CCP46564.1"/>
    <property type="molecule type" value="Genomic_DNA"/>
</dbReference>
<dbReference type="RefSeq" id="NP_218254.1">
    <property type="nucleotide sequence ID" value="NC_000962.3"/>
</dbReference>
<dbReference type="RefSeq" id="WP_003912272.1">
    <property type="nucleotide sequence ID" value="NZ_NVQJ01000009.1"/>
</dbReference>
<dbReference type="STRING" id="83332.Rv3737"/>
<dbReference type="PaxDb" id="83332-Rv3737"/>
<dbReference type="DNASU" id="885794"/>
<dbReference type="GeneID" id="885794"/>
<dbReference type="KEGG" id="mtu:Rv3737"/>
<dbReference type="KEGG" id="mtv:RVBD_3737"/>
<dbReference type="PATRIC" id="fig|83332.111.peg.4157"/>
<dbReference type="TubercuList" id="Rv3737"/>
<dbReference type="eggNOG" id="COG2966">
    <property type="taxonomic scope" value="Bacteria"/>
</dbReference>
<dbReference type="eggNOG" id="COG3610">
    <property type="taxonomic scope" value="Bacteria"/>
</dbReference>
<dbReference type="InParanoid" id="O69704"/>
<dbReference type="OrthoDB" id="9763957at2"/>
<dbReference type="PhylomeDB" id="O69704"/>
<dbReference type="Proteomes" id="UP000001584">
    <property type="component" value="Chromosome"/>
</dbReference>
<dbReference type="GO" id="GO:0005829">
    <property type="term" value="C:cytosol"/>
    <property type="evidence" value="ECO:0007005"/>
    <property type="project" value="MTBBASE"/>
</dbReference>
<dbReference type="GO" id="GO:0005886">
    <property type="term" value="C:plasma membrane"/>
    <property type="evidence" value="ECO:0007669"/>
    <property type="project" value="UniProtKB-SubCell"/>
</dbReference>
<dbReference type="GO" id="GO:0022857">
    <property type="term" value="F:transmembrane transporter activity"/>
    <property type="evidence" value="ECO:0007669"/>
    <property type="project" value="InterPro"/>
</dbReference>
<dbReference type="GO" id="GO:0006865">
    <property type="term" value="P:amino acid transport"/>
    <property type="evidence" value="ECO:0007669"/>
    <property type="project" value="UniProtKB-KW"/>
</dbReference>
<dbReference type="InterPro" id="IPR010619">
    <property type="entry name" value="ThrE-like_N"/>
</dbReference>
<dbReference type="InterPro" id="IPR051361">
    <property type="entry name" value="ThrE/Ser_Exporter"/>
</dbReference>
<dbReference type="InterPro" id="IPR024528">
    <property type="entry name" value="ThrE_2"/>
</dbReference>
<dbReference type="PANTHER" id="PTHR31082">
    <property type="entry name" value="PHEROMONE-REGULATED MEMBRANE PROTEIN 10"/>
    <property type="match status" value="1"/>
</dbReference>
<dbReference type="PANTHER" id="PTHR31082:SF4">
    <property type="entry name" value="PHEROMONE-REGULATED MEMBRANE PROTEIN 10"/>
    <property type="match status" value="1"/>
</dbReference>
<dbReference type="Pfam" id="PF06738">
    <property type="entry name" value="ThrE"/>
    <property type="match status" value="1"/>
</dbReference>
<dbReference type="Pfam" id="PF12821">
    <property type="entry name" value="ThrE_2"/>
    <property type="match status" value="1"/>
</dbReference>
<evidence type="ECO:0000250" key="1">
    <source>
        <dbReference type="UniProtKB" id="H7C6B6"/>
    </source>
</evidence>
<evidence type="ECO:0000255" key="2"/>
<evidence type="ECO:0000256" key="3">
    <source>
        <dbReference type="SAM" id="MobiDB-lite"/>
    </source>
</evidence>
<evidence type="ECO:0000269" key="4">
    <source>
    </source>
</evidence>
<evidence type="ECO:0000269" key="5">
    <source>
    </source>
</evidence>
<evidence type="ECO:0000305" key="6"/>
<evidence type="ECO:0000312" key="7">
    <source>
        <dbReference type="EMBL" id="CCP46564.1"/>
    </source>
</evidence>
<gene>
    <name evidence="7" type="ordered locus">Rv3737</name>
</gene>
<name>THRE_MYCTU</name>
<accession>O69704</accession>
<accession>I6YH16</accession>
<accession>L0TDN2</accession>
<reference key="1">
    <citation type="journal article" date="1998" name="Nature">
        <title>Deciphering the biology of Mycobacterium tuberculosis from the complete genome sequence.</title>
        <authorList>
            <person name="Cole S.T."/>
            <person name="Brosch R."/>
            <person name="Parkhill J."/>
            <person name="Garnier T."/>
            <person name="Churcher C.M."/>
            <person name="Harris D.E."/>
            <person name="Gordon S.V."/>
            <person name="Eiglmeier K."/>
            <person name="Gas S."/>
            <person name="Barry C.E. III"/>
            <person name="Tekaia F."/>
            <person name="Badcock K."/>
            <person name="Basham D."/>
            <person name="Brown D."/>
            <person name="Chillingworth T."/>
            <person name="Connor R."/>
            <person name="Davies R.M."/>
            <person name="Devlin K."/>
            <person name="Feltwell T."/>
            <person name="Gentles S."/>
            <person name="Hamlin N."/>
            <person name="Holroyd S."/>
            <person name="Hornsby T."/>
            <person name="Jagels K."/>
            <person name="Krogh A."/>
            <person name="McLean J."/>
            <person name="Moule S."/>
            <person name="Murphy L.D."/>
            <person name="Oliver S."/>
            <person name="Osborne J."/>
            <person name="Quail M.A."/>
            <person name="Rajandream M.A."/>
            <person name="Rogers J."/>
            <person name="Rutter S."/>
            <person name="Seeger K."/>
            <person name="Skelton S."/>
            <person name="Squares S."/>
            <person name="Squares R."/>
            <person name="Sulston J.E."/>
            <person name="Taylor K."/>
            <person name="Whitehead S."/>
            <person name="Barrell B.G."/>
        </authorList>
    </citation>
    <scope>NUCLEOTIDE SEQUENCE [LARGE SCALE GENOMIC DNA]</scope>
    <source>
        <strain>ATCC 25618 / H37Rv</strain>
    </source>
</reference>
<reference key="2">
    <citation type="journal article" date="2022" name="BMC Infect. Dis.">
        <title>Rv3737 is required for Mycobacterium tuberculosis growth in vitro and in vivo and correlates with bacterial load and disease severity in human tuberculosis.</title>
        <authorList>
            <person name="Li Q."/>
            <person name="Peng Z."/>
            <person name="Fu X."/>
            <person name="Wang H."/>
            <person name="Zhao Z."/>
            <person name="Pang Y."/>
            <person name="Chen L."/>
        </authorList>
    </citation>
    <scope>FUNCTION IN VIRULENCE</scope>
    <scope>INDUCTION</scope>
    <scope>DISRUPTION PHENOTYPE</scope>
    <source>
        <strain>H37Rv</strain>
    </source>
</reference>
<reference key="3">
    <citation type="journal article" date="2024" name="J. Infect. Chemother.">
        <title>Increased expression of Mycobacterium tuberculosis Rv3737 gene associated with low-level amikacin resistance.</title>
        <authorList>
            <person name="Li Q."/>
            <person name="Tian P."/>
            <person name="Xu C."/>
            <person name="Peng Z."/>
            <person name="Xu P."/>
            <person name="Zhang H."/>
            <person name="Chen L."/>
        </authorList>
    </citation>
    <scope>FUNCTION</scope>
    <scope>DISRUPTION PHENOTYPE</scope>
    <source>
        <strain>H37Rv</strain>
    </source>
</reference>
<feature type="chain" id="PRO_0000456292" description="Probable threonine/serine exporter">
    <location>
        <begin position="1"/>
        <end position="529"/>
    </location>
</feature>
<feature type="transmembrane region" description="Helical" evidence="2">
    <location>
        <begin position="88"/>
        <end position="108"/>
    </location>
</feature>
<feature type="transmembrane region" description="Helical" evidence="2">
    <location>
        <begin position="168"/>
        <end position="188"/>
    </location>
</feature>
<feature type="transmembrane region" description="Helical" evidence="2">
    <location>
        <begin position="212"/>
        <end position="232"/>
    </location>
</feature>
<feature type="transmembrane region" description="Helical" evidence="2">
    <location>
        <begin position="234"/>
        <end position="254"/>
    </location>
</feature>
<feature type="transmembrane region" description="Helical" evidence="2">
    <location>
        <begin position="265"/>
        <end position="285"/>
    </location>
</feature>
<feature type="transmembrane region" description="Helical" evidence="2">
    <location>
        <begin position="312"/>
        <end position="332"/>
    </location>
</feature>
<feature type="transmembrane region" description="Helical" evidence="2">
    <location>
        <begin position="344"/>
        <end position="364"/>
    </location>
</feature>
<feature type="transmembrane region" description="Helical" evidence="2">
    <location>
        <begin position="365"/>
        <end position="385"/>
    </location>
</feature>
<feature type="transmembrane region" description="Helical" evidence="2">
    <location>
        <begin position="389"/>
        <end position="409"/>
    </location>
</feature>
<feature type="transmembrane region" description="Helical" evidence="2">
    <location>
        <begin position="428"/>
        <end position="448"/>
    </location>
</feature>
<feature type="region of interest" description="Disordered" evidence="3">
    <location>
        <begin position="482"/>
        <end position="501"/>
    </location>
</feature>
<comment type="function">
    <text evidence="1 4 5">Catalyzes the export of L-threonine and L-serine from the cell to the extracellular environment (By similarity). Export is dependent on the proton motive force (By similarity). Required for in vitro growth and survival of bacteria inside macrophages (PubMed:35287590). Increased expression is associated with low-level amikacin (AMK) resistance (PubMed:38012984).</text>
</comment>
<comment type="catalytic activity">
    <reaction evidence="1">
        <text>L-threonine(in) + H(+)(out) = L-threonine(out) + H(+)(in)</text>
        <dbReference type="Rhea" id="RHEA:28995"/>
        <dbReference type="ChEBI" id="CHEBI:15378"/>
        <dbReference type="ChEBI" id="CHEBI:57926"/>
    </reaction>
    <physiologicalReaction direction="left-to-right" evidence="1">
        <dbReference type="Rhea" id="RHEA:28996"/>
    </physiologicalReaction>
</comment>
<comment type="subcellular location">
    <subcellularLocation>
        <location evidence="6">Cell membrane</location>
        <topology evidence="2">Multi-pass membrane protein</topology>
    </subcellularLocation>
</comment>
<comment type="induction">
    <text evidence="4">Expression is significantly increased in clinical isolates (PubMed:35287590). Expression level is positively correlated with lung cavity number of TB patients (PubMed:35287590).</text>
</comment>
<comment type="disruption phenotype">
    <text evidence="4 5">Deletion mutant exhibits decreased growth rate compared to wild-type strain in standard culture medium (PubMed:35287590). In addition, the mutant shows decreased survival rate in macrophages (PubMed:35287590). Infected macrophages produce a significantly higher level of TNF-alpha and IL-6 mRNA expression (PubMed:35287590). Knockout of the gene increases the susceptibility to amikacin (AMK) (PubMed:38012984).</text>
</comment>
<comment type="similarity">
    <text evidence="6">Belongs to the ThrE exporter (TC 2.A.79) family.</text>
</comment>